<dbReference type="EC" id="3.1.1.1" evidence="3"/>
<dbReference type="EMBL" id="EU564833">
    <property type="protein sequence ID" value="ACB70231.1"/>
    <property type="molecule type" value="mRNA"/>
</dbReference>
<dbReference type="RefSeq" id="NP_001119716.1">
    <property type="nucleotide sequence ID" value="NM_001126244.1"/>
</dbReference>
<dbReference type="SMR" id="B2D0J5"/>
<dbReference type="FunCoup" id="B2D0J5">
    <property type="interactions" value="35"/>
</dbReference>
<dbReference type="STRING" id="7460.B2D0J5"/>
<dbReference type="Allergome" id="5756">
    <property type="allergen name" value="Api m 8"/>
</dbReference>
<dbReference type="Allergome" id="5757">
    <property type="allergen name" value="Api m 8.0101"/>
</dbReference>
<dbReference type="ESTHER" id="apime-b2d0j5">
    <property type="family name" value="Carb_B_Arthropoda"/>
</dbReference>
<dbReference type="PaxDb" id="7460-GB53756-PA"/>
<dbReference type="EnsemblMetazoa" id="NM_001126244">
    <property type="protein sequence ID" value="NP_001119716"/>
    <property type="gene ID" value="GeneID_410928"/>
</dbReference>
<dbReference type="GeneID" id="410928"/>
<dbReference type="KEGG" id="ame:410928"/>
<dbReference type="CTD" id="39392"/>
<dbReference type="eggNOG" id="KOG1516">
    <property type="taxonomic scope" value="Eukaryota"/>
</dbReference>
<dbReference type="InParanoid" id="B2D0J5"/>
<dbReference type="OrthoDB" id="6846267at2759"/>
<dbReference type="PhylomeDB" id="B2D0J5"/>
<dbReference type="Proteomes" id="UP000005203">
    <property type="component" value="Linkage group LG3"/>
</dbReference>
<dbReference type="GO" id="GO:0005576">
    <property type="term" value="C:extracellular region"/>
    <property type="evidence" value="ECO:0007669"/>
    <property type="project" value="UniProtKB-SubCell"/>
</dbReference>
<dbReference type="GO" id="GO:0106435">
    <property type="term" value="F:carboxylesterase activity"/>
    <property type="evidence" value="ECO:0007669"/>
    <property type="project" value="UniProtKB-EC"/>
</dbReference>
<dbReference type="Gene3D" id="3.40.50.1820">
    <property type="entry name" value="alpha/beta hydrolase"/>
    <property type="match status" value="1"/>
</dbReference>
<dbReference type="InterPro" id="IPR029058">
    <property type="entry name" value="AB_hydrolase_fold"/>
</dbReference>
<dbReference type="InterPro" id="IPR002018">
    <property type="entry name" value="CarbesteraseB"/>
</dbReference>
<dbReference type="InterPro" id="IPR019826">
    <property type="entry name" value="Carboxylesterase_B_AS"/>
</dbReference>
<dbReference type="InterPro" id="IPR019819">
    <property type="entry name" value="Carboxylesterase_B_CS"/>
</dbReference>
<dbReference type="InterPro" id="IPR050309">
    <property type="entry name" value="Type-B_Carboxylest/Lipase"/>
</dbReference>
<dbReference type="PANTHER" id="PTHR11559">
    <property type="entry name" value="CARBOXYLESTERASE"/>
    <property type="match status" value="1"/>
</dbReference>
<dbReference type="Pfam" id="PF00135">
    <property type="entry name" value="COesterase"/>
    <property type="match status" value="1"/>
</dbReference>
<dbReference type="SUPFAM" id="SSF53474">
    <property type="entry name" value="alpha/beta-Hydrolases"/>
    <property type="match status" value="1"/>
</dbReference>
<dbReference type="PROSITE" id="PS00122">
    <property type="entry name" value="CARBOXYLESTERASE_B_1"/>
    <property type="match status" value="1"/>
</dbReference>
<dbReference type="PROSITE" id="PS00941">
    <property type="entry name" value="CARBOXYLESTERASE_B_2"/>
    <property type="match status" value="1"/>
</dbReference>
<feature type="signal peptide" evidence="3">
    <location>
        <begin position="1"/>
        <end position="21"/>
    </location>
</feature>
<feature type="chain" id="PRO_5000336988" description="Venom carboxylesterase-6">
    <location>
        <begin position="22"/>
        <end position="557"/>
    </location>
</feature>
<feature type="active site" description="Acyl-ester intermediate" evidence="2 4">
    <location>
        <position position="212"/>
    </location>
</feature>
<feature type="active site" description="Charge relay system" evidence="2">
    <location>
        <position position="341"/>
    </location>
</feature>
<feature type="active site" description="Charge relay system" evidence="2">
    <location>
        <position position="464"/>
    </location>
</feature>
<feature type="glycosylation site" description="N-linked (GlcNAc...) asparagine" evidence="3">
    <location>
        <position position="145"/>
    </location>
</feature>
<feature type="glycosylation site" description="N-linked (GlcNAc...) asparagine" evidence="3">
    <location>
        <position position="374"/>
    </location>
</feature>
<feature type="glycosylation site" description="N-linked (GlcNAc...) asparagine" evidence="3">
    <location>
        <position position="478"/>
    </location>
</feature>
<feature type="glycosylation site" description="N-linked (GlcNAc...) asparagine" evidence="3">
    <location>
        <position position="528"/>
    </location>
</feature>
<feature type="glycosylation site" description="N-linked (GlcNAc...) asparagine" evidence="3">
    <location>
        <position position="542"/>
    </location>
</feature>
<feature type="disulfide bond" evidence="2">
    <location>
        <begin position="88"/>
        <end position="108"/>
    </location>
</feature>
<feature type="disulfide bond" evidence="2">
    <location>
        <begin position="264"/>
        <end position="275"/>
    </location>
</feature>
<proteinExistence type="evidence at transcript level"/>
<keyword id="KW-0020">Allergen</keyword>
<keyword id="KW-1015">Disulfide bond</keyword>
<keyword id="KW-0325">Glycoprotein</keyword>
<keyword id="KW-0378">Hydrolase</keyword>
<keyword id="KW-1185">Reference proteome</keyword>
<keyword id="KW-0964">Secreted</keyword>
<keyword id="KW-0719">Serine esterase</keyword>
<keyword id="KW-0732">Signal</keyword>
<organism>
    <name type="scientific">Apis mellifera</name>
    <name type="common">Honeybee</name>
    <dbReference type="NCBI Taxonomy" id="7460"/>
    <lineage>
        <taxon>Eukaryota</taxon>
        <taxon>Metazoa</taxon>
        <taxon>Ecdysozoa</taxon>
        <taxon>Arthropoda</taxon>
        <taxon>Hexapoda</taxon>
        <taxon>Insecta</taxon>
        <taxon>Pterygota</taxon>
        <taxon>Neoptera</taxon>
        <taxon>Endopterygota</taxon>
        <taxon>Hymenoptera</taxon>
        <taxon>Apocrita</taxon>
        <taxon>Aculeata</taxon>
        <taxon>Apoidea</taxon>
        <taxon>Anthophila</taxon>
        <taxon>Apidae</taxon>
        <taxon>Apis</taxon>
    </lineage>
</organism>
<name>EST6_APIME</name>
<evidence type="ECO:0000250" key="1"/>
<evidence type="ECO:0000250" key="2">
    <source>
        <dbReference type="UniProtKB" id="P23141"/>
    </source>
</evidence>
<evidence type="ECO:0000255" key="3"/>
<evidence type="ECO:0000255" key="4">
    <source>
        <dbReference type="PROSITE-ProRule" id="PRU10039"/>
    </source>
</evidence>
<evidence type="ECO:0000305" key="5"/>
<evidence type="ECO:0000305" key="6">
    <source ref="1"/>
</evidence>
<evidence type="ECO:0000312" key="7">
    <source>
        <dbReference type="EMBL" id="ACB70231.1"/>
    </source>
</evidence>
<protein>
    <recommendedName>
        <fullName evidence="7">Venom carboxylesterase-6</fullName>
        <ecNumber evidence="3">3.1.1.1</ecNumber>
    </recommendedName>
    <allergenName>Api m 8</allergenName>
</protein>
<sequence length="557" mass="63637">MYMLKLSYILLFLGFVKFSWQDKQVPKVSTFTGNIRGYYKKSRSDRLYEAYEGIPYAQSPVGKFRFQPPRPIKKWSKDLSATKKSSVCMQYLMTFTTHGNRVKGSEDCLYINIYVPVRNNRKPLLPVMFWIHGGAFQFASGNEANETLFMDRNIVFVAINYRLGPFGFLSTGDIVVPGNMGLKDQSMALRWVFNNIKSFGGNPNKITIFGMSAGGASVHYHYLSPMSAGLFKRGISISGVAFCPWAQTKHAPEKAKKLGALMKCRTDNTKKMIDCLQSRPARIIAQAVGDFMFWLYNPFTPFGPVVETYGSNPFISNSPINIINNGQVYDVPWISGVVSKEGLYTAAEFVDNAKLLWHLNDHWDEIAPYLLDFNYTIPLDQHRQVAKKIKNYYLRSGPINYDKVESIIQMMSDRLFNIDFEKAVRLQARINKSPVWTYYYSYRAEHSVSEILSGGSTTDYGVCHGDDIFLTLNSIISNVTKPQDLAMQQLLINFYTSFAIQGIPYIDEASWPSLNPNDPDFRYLHIVNFTNIKMEVNNNFANKSFWKTIPFNENKLN</sequence>
<accession>B2D0J5</accession>
<comment type="catalytic activity">
    <reaction evidence="4">
        <text>a carboxylic ester + H2O = an alcohol + a carboxylate + H(+)</text>
        <dbReference type="Rhea" id="RHEA:21164"/>
        <dbReference type="ChEBI" id="CHEBI:15377"/>
        <dbReference type="ChEBI" id="CHEBI:15378"/>
        <dbReference type="ChEBI" id="CHEBI:29067"/>
        <dbReference type="ChEBI" id="CHEBI:30879"/>
        <dbReference type="ChEBI" id="CHEBI:33308"/>
        <dbReference type="EC" id="3.1.1.1"/>
    </reaction>
</comment>
<comment type="subcellular location">
    <subcellularLocation>
        <location evidence="6">Secreted</location>
    </subcellularLocation>
</comment>
<comment type="tissue specificity">
    <text evidence="6">Expressed by the venom gland.</text>
</comment>
<comment type="allergen">
    <text evidence="1">Causes an allergic reaction in human.</text>
</comment>
<comment type="similarity">
    <text evidence="5">Belongs to the type-B carboxylesterase/lipase family.</text>
</comment>
<reference key="1">
    <citation type="submission" date="2008-03" db="EMBL/GenBank/DDBJ databases">
        <title>Identification and recombinant expression of a novel IgE-reactive 70 kDa carboxylesterase from Apis mellifera venom.</title>
        <authorList>
            <person name="Blank S."/>
            <person name="Seismann H."/>
            <person name="Bockisch B."/>
            <person name="Braren I."/>
            <person name="Bredehorst R."/>
            <person name="Grunwald T."/>
            <person name="Ollert M."/>
            <person name="Spillner E."/>
        </authorList>
    </citation>
    <scope>NUCLEOTIDE SEQUENCE [MRNA]</scope>
    <source>
        <tissue>Venom gland</tissue>
    </source>
</reference>
<reference key="2">
    <citation type="journal article" date="2006" name="Nature">
        <title>Insights into social insects from the genome of the honeybee Apis mellifera.</title>
        <authorList>
            <consortium name="Honeybee genome sequencing consortium"/>
        </authorList>
    </citation>
    <scope>NUCLEOTIDE SEQUENCE [LARGE SCALE GENOMIC DNA]</scope>
</reference>